<proteinExistence type="evidence at protein level"/>
<reference evidence="7" key="1">
    <citation type="journal article" date="1998" name="Science">
        <title>Genome sequence of the nematode C. elegans: a platform for investigating biology.</title>
        <authorList>
            <consortium name="The C. elegans sequencing consortium"/>
        </authorList>
    </citation>
    <scope>NUCLEOTIDE SEQUENCE [LARGE SCALE GENOMIC DNA]</scope>
    <source>
        <strain evidence="7">Bristol N2</strain>
    </source>
</reference>
<reference evidence="6" key="2">
    <citation type="journal article" date="2004" name="Dev. Cell">
        <title>The lateral signal for LIN-12/Notch in C. elegans vulval development comprises redundant secreted and transmembrane DSL proteins.</title>
        <authorList>
            <person name="Chen N."/>
            <person name="Greenwald I."/>
        </authorList>
    </citation>
    <scope>FUNCTION</scope>
    <scope>SUBCELLULAR LOCATION</scope>
    <scope>DISRUPTION PHENOTYPE</scope>
</reference>
<reference evidence="6" key="3">
    <citation type="journal article" date="2008" name="PLoS Biol.">
        <title>OSM-11 facilitates LIN-12 Notch signaling during Caenorhabditis elegans vulval development.</title>
        <authorList>
            <person name="Komatsu H."/>
            <person name="Chao M.Y."/>
            <person name="Larkins-Ford J."/>
            <person name="Corkins M.E."/>
            <person name="Somers G.A."/>
            <person name="Tucey T."/>
            <person name="Dionne H.M."/>
            <person name="White J.Q."/>
            <person name="Wani K."/>
            <person name="Boxem M."/>
            <person name="Hart A.C."/>
        </authorList>
    </citation>
    <scope>FUNCTION</scope>
    <scope>INTERACTION WITH LIN-12</scope>
    <scope>DISRUPTION PHENOTYPE</scope>
</reference>
<comment type="function">
    <text evidence="4 5">Probable secreted Notch ligand involved in the mediation of Notch signaling (PubMed:14960273, PubMed:18700817). Involved in the lin-12/Notch pathway-mediated signaling of cell fate in vulval precursor cells (VPCs), acting redundantly with lag-2, apx-1 and osm-11 (PubMed:14960273, PubMed:18700817). May also be involved in glp-1/Notch signaling (PubMed:14960273).</text>
</comment>
<comment type="subunit">
    <text evidence="5">May interact with lin-12/Notch receptor.</text>
</comment>
<comment type="subcellular location">
    <subcellularLocation>
        <location evidence="4">Secreted</location>
    </subcellularLocation>
</comment>
<comment type="disruption phenotype">
    <text evidence="4 5">Causes adjacent vulval precursor cells (VPCs) to adopt altered cell fate; phenotype exacerbated when combined with simultaneous RNAi-mediated knockdown of apx-1 and lag-2, and further worsened on lin-15 mutant background (PubMed:14960273). Severe vulval precursor cell (VPC) fate abnormalities, vulval defects and failure to up-regulate lip-1 expression, on an osm-11 mutant background (PubMed:18700817).</text>
</comment>
<keyword id="KW-0217">Developmental protein</keyword>
<keyword id="KW-1015">Disulfide bond</keyword>
<keyword id="KW-0245">EGF-like domain</keyword>
<keyword id="KW-0914">Notch signaling pathway</keyword>
<keyword id="KW-1185">Reference proteome</keyword>
<keyword id="KW-0677">Repeat</keyword>
<keyword id="KW-0964">Secreted</keyword>
<keyword id="KW-0732">Signal</keyword>
<accession>O45201</accession>
<evidence type="ECO:0000255" key="1"/>
<evidence type="ECO:0000255" key="2">
    <source>
        <dbReference type="PROSITE-ProRule" id="PRU00076"/>
    </source>
</evidence>
<evidence type="ECO:0000255" key="3">
    <source>
        <dbReference type="PROSITE-ProRule" id="PRU00377"/>
    </source>
</evidence>
<evidence type="ECO:0000269" key="4">
    <source>
    </source>
</evidence>
<evidence type="ECO:0000269" key="5">
    <source>
    </source>
</evidence>
<evidence type="ECO:0000305" key="6"/>
<evidence type="ECO:0000312" key="7">
    <source>
        <dbReference type="Proteomes" id="UP000001940"/>
    </source>
</evidence>
<evidence type="ECO:0000312" key="8">
    <source>
        <dbReference type="WormBase" id="W09G12.4"/>
    </source>
</evidence>
<sequence>MLKYLIFLAILISVVHSNGYMTIRLKSAFPLNVTVEVAEEVYFPTNKRSFNLQLKPNRVGFVSNIPVKFGRPGLVLVDCSPVEKFQIHRVTLRSIRWNTHVRSVASDNIFLPFTGFRYDIKCNRYWHGLHCDHFCNDDFARTINRRCTQNGTLGCLEGFHGPNCELPVPADSCKCQNGGKCVSSLENTWAQNGSLICECRLGHFEGKHCEKKSFNYFPKIEATTYATKDSHLARQFYNNSRVPNELATLPRL</sequence>
<feature type="signal peptide" evidence="1">
    <location>
        <begin position="1"/>
        <end position="17"/>
    </location>
</feature>
<feature type="chain" id="PRO_5004158656" description="Delta-like protein dsl-1" evidence="1">
    <location>
        <begin position="18"/>
        <end position="252"/>
    </location>
</feature>
<feature type="domain" description="DSL" evidence="3">
    <location>
        <begin position="120"/>
        <end position="164"/>
    </location>
</feature>
<feature type="domain" description="EGF-like" evidence="2">
    <location>
        <begin position="169"/>
        <end position="210"/>
    </location>
</feature>
<feature type="disulfide bond" evidence="3">
    <location>
        <begin position="122"/>
        <end position="131"/>
    </location>
</feature>
<feature type="disulfide bond" evidence="3">
    <location>
        <begin position="135"/>
        <end position="147"/>
    </location>
</feature>
<feature type="disulfide bond" evidence="3">
    <location>
        <begin position="155"/>
        <end position="164"/>
    </location>
</feature>
<feature type="disulfide bond" evidence="2">
    <location>
        <begin position="173"/>
        <end position="181"/>
    </location>
</feature>
<feature type="disulfide bond" evidence="2">
    <location>
        <begin position="175"/>
        <end position="197"/>
    </location>
</feature>
<feature type="disulfide bond" evidence="2">
    <location>
        <begin position="199"/>
        <end position="209"/>
    </location>
</feature>
<dbReference type="EMBL" id="BX284604">
    <property type="protein sequence ID" value="CCD74020.1"/>
    <property type="molecule type" value="Genomic_DNA"/>
</dbReference>
<dbReference type="PIR" id="B88637">
    <property type="entry name" value="B88637"/>
</dbReference>
<dbReference type="RefSeq" id="NP_500054.1">
    <property type="nucleotide sequence ID" value="NM_067653.4"/>
</dbReference>
<dbReference type="DIP" id="DIP-46052N"/>
<dbReference type="FunCoup" id="O45201">
    <property type="interactions" value="18"/>
</dbReference>
<dbReference type="IntAct" id="O45201">
    <property type="interactions" value="1"/>
</dbReference>
<dbReference type="STRING" id="6239.W09G12.4.1"/>
<dbReference type="PaxDb" id="6239-W09G12.4"/>
<dbReference type="EnsemblMetazoa" id="W09G12.4.1">
    <property type="protein sequence ID" value="W09G12.4.1"/>
    <property type="gene ID" value="WBGene00001103"/>
</dbReference>
<dbReference type="GeneID" id="176939"/>
<dbReference type="KEGG" id="cel:CELE_W09G12.4"/>
<dbReference type="UCSC" id="W09G12.4">
    <property type="organism name" value="c. elegans"/>
</dbReference>
<dbReference type="AGR" id="WB:WBGene00001103"/>
<dbReference type="CTD" id="176939"/>
<dbReference type="WormBase" id="W09G12.4">
    <property type="protein sequence ID" value="CE18343"/>
    <property type="gene ID" value="WBGene00001103"/>
    <property type="gene designation" value="dsl-1"/>
</dbReference>
<dbReference type="eggNOG" id="KOG1218">
    <property type="taxonomic scope" value="Eukaryota"/>
</dbReference>
<dbReference type="GeneTree" id="ENSGT00970000195885"/>
<dbReference type="HOGENOM" id="CLU_077229_0_0_1"/>
<dbReference type="InParanoid" id="O45201"/>
<dbReference type="OMA" id="RSERWNT"/>
<dbReference type="OrthoDB" id="10014052at2759"/>
<dbReference type="PhylomeDB" id="O45201"/>
<dbReference type="PRO" id="PR:O45201"/>
<dbReference type="Proteomes" id="UP000001940">
    <property type="component" value="Chromosome IV"/>
</dbReference>
<dbReference type="Bgee" id="WBGene00001103">
    <property type="expression patterns" value="Expressed in embryo and 4 other cell types or tissues"/>
</dbReference>
<dbReference type="GO" id="GO:0005576">
    <property type="term" value="C:extracellular region"/>
    <property type="evidence" value="ECO:0007669"/>
    <property type="project" value="UniProtKB-SubCell"/>
</dbReference>
<dbReference type="GO" id="GO:0005886">
    <property type="term" value="C:plasma membrane"/>
    <property type="evidence" value="ECO:0000318"/>
    <property type="project" value="GO_Central"/>
</dbReference>
<dbReference type="GO" id="GO:0005112">
    <property type="term" value="F:Notch binding"/>
    <property type="evidence" value="ECO:0000353"/>
    <property type="project" value="WormBase"/>
</dbReference>
<dbReference type="GO" id="GO:0001708">
    <property type="term" value="P:cell fate specification"/>
    <property type="evidence" value="ECO:0000318"/>
    <property type="project" value="GO_Central"/>
</dbReference>
<dbReference type="GO" id="GO:0007219">
    <property type="term" value="P:Notch signaling pathway"/>
    <property type="evidence" value="ECO:0007669"/>
    <property type="project" value="UniProtKB-KW"/>
</dbReference>
<dbReference type="CDD" id="cd00054">
    <property type="entry name" value="EGF_CA"/>
    <property type="match status" value="1"/>
</dbReference>
<dbReference type="Gene3D" id="2.10.25.140">
    <property type="match status" value="1"/>
</dbReference>
<dbReference type="Gene3D" id="2.10.25.10">
    <property type="entry name" value="Laminin"/>
    <property type="match status" value="1"/>
</dbReference>
<dbReference type="InterPro" id="IPR001774">
    <property type="entry name" value="DSL"/>
</dbReference>
<dbReference type="InterPro" id="IPR000742">
    <property type="entry name" value="EGF-like_dom"/>
</dbReference>
<dbReference type="InterPro" id="IPR039178">
    <property type="entry name" value="Lag2"/>
</dbReference>
<dbReference type="PANTHER" id="PTHR22669:SF1">
    <property type="entry name" value="DELTA-LIKE PROTEIN DSL-1"/>
    <property type="match status" value="1"/>
</dbReference>
<dbReference type="PANTHER" id="PTHR22669">
    <property type="entry name" value="DELTA/SERRATE/LAG-2 DOMAIN PROTEIN"/>
    <property type="match status" value="1"/>
</dbReference>
<dbReference type="Pfam" id="PF01414">
    <property type="entry name" value="DSL"/>
    <property type="match status" value="1"/>
</dbReference>
<dbReference type="SMART" id="SM00051">
    <property type="entry name" value="DSL"/>
    <property type="match status" value="1"/>
</dbReference>
<dbReference type="PROSITE" id="PS51051">
    <property type="entry name" value="DSL"/>
    <property type="match status" value="1"/>
</dbReference>
<dbReference type="PROSITE" id="PS50026">
    <property type="entry name" value="EGF_3"/>
    <property type="match status" value="1"/>
</dbReference>
<gene>
    <name evidence="8" type="primary">dsl-1</name>
    <name evidence="8" type="ORF">W09G12.4</name>
</gene>
<name>DSL1_CAEEL</name>
<protein>
    <recommendedName>
        <fullName evidence="6">Delta-like protein dsl-1</fullName>
    </recommendedName>
    <alternativeName>
        <fullName evidence="8">DSL-domain containing protein dsl-1</fullName>
    </alternativeName>
</protein>
<organism evidence="7">
    <name type="scientific">Caenorhabditis elegans</name>
    <dbReference type="NCBI Taxonomy" id="6239"/>
    <lineage>
        <taxon>Eukaryota</taxon>
        <taxon>Metazoa</taxon>
        <taxon>Ecdysozoa</taxon>
        <taxon>Nematoda</taxon>
        <taxon>Chromadorea</taxon>
        <taxon>Rhabditida</taxon>
        <taxon>Rhabditina</taxon>
        <taxon>Rhabditomorpha</taxon>
        <taxon>Rhabditoidea</taxon>
        <taxon>Rhabditidae</taxon>
        <taxon>Peloderinae</taxon>
        <taxon>Caenorhabditis</taxon>
    </lineage>
</organism>